<dbReference type="EC" id="3.4.21.53" evidence="1"/>
<dbReference type="EMBL" id="AB064323">
    <property type="protein sequence ID" value="BAB62423.1"/>
    <property type="molecule type" value="mRNA"/>
</dbReference>
<dbReference type="RefSeq" id="NP_596895.1">
    <property type="nucleotide sequence ID" value="NM_133404.1"/>
</dbReference>
<dbReference type="SMR" id="Q924S5"/>
<dbReference type="BioGRID" id="251027">
    <property type="interactions" value="2"/>
</dbReference>
<dbReference type="FunCoup" id="Q924S5">
    <property type="interactions" value="2127"/>
</dbReference>
<dbReference type="IntAct" id="Q924S5">
    <property type="interactions" value="2"/>
</dbReference>
<dbReference type="STRING" id="10116.ENSRNOP00000066618"/>
<dbReference type="MEROPS" id="S16.002"/>
<dbReference type="GlyGen" id="Q924S5">
    <property type="glycosylation" value="1 site"/>
</dbReference>
<dbReference type="iPTMnet" id="Q924S5"/>
<dbReference type="PhosphoSitePlus" id="Q924S5"/>
<dbReference type="jPOST" id="Q924S5"/>
<dbReference type="PaxDb" id="10116-ENSRNOP00000066618"/>
<dbReference type="Ensembl" id="ENSRNOT00000074253.2">
    <property type="protein sequence ID" value="ENSRNOP00000066618.1"/>
    <property type="gene ID" value="ENSRNOG00000046502.2"/>
</dbReference>
<dbReference type="GeneID" id="170916"/>
<dbReference type="KEGG" id="rno:170916"/>
<dbReference type="AGR" id="RGD:621598"/>
<dbReference type="CTD" id="9361"/>
<dbReference type="RGD" id="621598">
    <property type="gene designation" value="Lonp1"/>
</dbReference>
<dbReference type="eggNOG" id="KOG2004">
    <property type="taxonomic scope" value="Eukaryota"/>
</dbReference>
<dbReference type="GeneTree" id="ENSGT00530000063553"/>
<dbReference type="HOGENOM" id="CLU_004109_1_1_1"/>
<dbReference type="InParanoid" id="Q924S5"/>
<dbReference type="OMA" id="WLTNIPW"/>
<dbReference type="OrthoDB" id="2411602at2759"/>
<dbReference type="PhylomeDB" id="Q924S5"/>
<dbReference type="Reactome" id="R-RNO-9837999">
    <property type="pathway name" value="Mitochondrial protein degradation"/>
</dbReference>
<dbReference type="PRO" id="PR:Q924S5"/>
<dbReference type="Proteomes" id="UP000002494">
    <property type="component" value="Chromosome 9"/>
</dbReference>
<dbReference type="Bgee" id="ENSRNOG00000046502">
    <property type="expression patterns" value="Expressed in adult mammalian kidney and 19 other cell types or tissues"/>
</dbReference>
<dbReference type="GO" id="GO:0005829">
    <property type="term" value="C:cytosol"/>
    <property type="evidence" value="ECO:0007669"/>
    <property type="project" value="Ensembl"/>
</dbReference>
<dbReference type="GO" id="GO:0005759">
    <property type="term" value="C:mitochondrial matrix"/>
    <property type="evidence" value="ECO:0000314"/>
    <property type="project" value="RGD"/>
</dbReference>
<dbReference type="GO" id="GO:0042645">
    <property type="term" value="C:mitochondrial nucleoid"/>
    <property type="evidence" value="ECO:0000266"/>
    <property type="project" value="RGD"/>
</dbReference>
<dbReference type="GO" id="GO:0005739">
    <property type="term" value="C:mitochondrion"/>
    <property type="evidence" value="ECO:0000266"/>
    <property type="project" value="RGD"/>
</dbReference>
<dbReference type="GO" id="GO:0005654">
    <property type="term" value="C:nucleoplasm"/>
    <property type="evidence" value="ECO:0007669"/>
    <property type="project" value="Ensembl"/>
</dbReference>
<dbReference type="GO" id="GO:0043531">
    <property type="term" value="F:ADP binding"/>
    <property type="evidence" value="ECO:0000266"/>
    <property type="project" value="RGD"/>
</dbReference>
<dbReference type="GO" id="GO:0005524">
    <property type="term" value="F:ATP binding"/>
    <property type="evidence" value="ECO:0000266"/>
    <property type="project" value="RGD"/>
</dbReference>
<dbReference type="GO" id="GO:0016887">
    <property type="term" value="F:ATP hydrolysis activity"/>
    <property type="evidence" value="ECO:0000266"/>
    <property type="project" value="RGD"/>
</dbReference>
<dbReference type="GO" id="GO:0004176">
    <property type="term" value="F:ATP-dependent peptidase activity"/>
    <property type="evidence" value="ECO:0000314"/>
    <property type="project" value="RGD"/>
</dbReference>
<dbReference type="GO" id="GO:0070182">
    <property type="term" value="F:DNA polymerase binding"/>
    <property type="evidence" value="ECO:0000266"/>
    <property type="project" value="RGD"/>
</dbReference>
<dbReference type="GO" id="GO:0051880">
    <property type="term" value="F:G-quadruplex DNA binding"/>
    <property type="evidence" value="ECO:0000266"/>
    <property type="project" value="RGD"/>
</dbReference>
<dbReference type="GO" id="GO:0042802">
    <property type="term" value="F:identical protein binding"/>
    <property type="evidence" value="ECO:0000266"/>
    <property type="project" value="RGD"/>
</dbReference>
<dbReference type="GO" id="GO:0043560">
    <property type="term" value="F:insulin receptor substrate binding"/>
    <property type="evidence" value="ECO:0000266"/>
    <property type="project" value="RGD"/>
</dbReference>
<dbReference type="GO" id="GO:0001018">
    <property type="term" value="F:mitochondrial promoter sequence-specific DNA binding"/>
    <property type="evidence" value="ECO:0000266"/>
    <property type="project" value="RGD"/>
</dbReference>
<dbReference type="GO" id="GO:0042731">
    <property type="term" value="F:PH domain binding"/>
    <property type="evidence" value="ECO:0000266"/>
    <property type="project" value="RGD"/>
</dbReference>
<dbReference type="GO" id="GO:0043565">
    <property type="term" value="F:sequence-specific DNA binding"/>
    <property type="evidence" value="ECO:0000266"/>
    <property type="project" value="RGD"/>
</dbReference>
<dbReference type="GO" id="GO:0004252">
    <property type="term" value="F:serine-type endopeptidase activity"/>
    <property type="evidence" value="ECO:0007669"/>
    <property type="project" value="UniProtKB-UniRule"/>
</dbReference>
<dbReference type="GO" id="GO:0003697">
    <property type="term" value="F:single-stranded DNA binding"/>
    <property type="evidence" value="ECO:0000266"/>
    <property type="project" value="RGD"/>
</dbReference>
<dbReference type="GO" id="GO:0003727">
    <property type="term" value="F:single-stranded RNA binding"/>
    <property type="evidence" value="ECO:0000266"/>
    <property type="project" value="RGD"/>
</dbReference>
<dbReference type="GO" id="GO:0034599">
    <property type="term" value="P:cellular response to oxidative stress"/>
    <property type="evidence" value="ECO:0000266"/>
    <property type="project" value="RGD"/>
</dbReference>
<dbReference type="GO" id="GO:0051131">
    <property type="term" value="P:chaperone-mediated protein complex assembly"/>
    <property type="evidence" value="ECO:0000318"/>
    <property type="project" value="GO_Central"/>
</dbReference>
<dbReference type="GO" id="GO:0007005">
    <property type="term" value="P:mitochondrion organization"/>
    <property type="evidence" value="ECO:0000270"/>
    <property type="project" value="RGD"/>
</dbReference>
<dbReference type="GO" id="GO:0046627">
    <property type="term" value="P:negative regulation of insulin receptor signaling pathway"/>
    <property type="evidence" value="ECO:0000266"/>
    <property type="project" value="RGD"/>
</dbReference>
<dbReference type="GO" id="GO:0070407">
    <property type="term" value="P:oxidation-dependent protein catabolic process"/>
    <property type="evidence" value="ECO:0000266"/>
    <property type="project" value="RGD"/>
</dbReference>
<dbReference type="GO" id="GO:0030163">
    <property type="term" value="P:protein catabolic process"/>
    <property type="evidence" value="ECO:0000314"/>
    <property type="project" value="RGD"/>
</dbReference>
<dbReference type="GO" id="GO:0006515">
    <property type="term" value="P:protein quality control for misfolded or incompletely synthesized proteins"/>
    <property type="evidence" value="ECO:0000318"/>
    <property type="project" value="GO_Central"/>
</dbReference>
<dbReference type="GO" id="GO:0065003">
    <property type="term" value="P:protein-containing complex assembly"/>
    <property type="evidence" value="ECO:0000315"/>
    <property type="project" value="RGD"/>
</dbReference>
<dbReference type="GO" id="GO:0006508">
    <property type="term" value="P:proteolysis"/>
    <property type="evidence" value="ECO:0000266"/>
    <property type="project" value="RGD"/>
</dbReference>
<dbReference type="GO" id="GO:0051603">
    <property type="term" value="P:proteolysis involved in protein catabolic process"/>
    <property type="evidence" value="ECO:0000266"/>
    <property type="project" value="RGD"/>
</dbReference>
<dbReference type="GO" id="GO:0010044">
    <property type="term" value="P:response to aluminum ion"/>
    <property type="evidence" value="ECO:0000270"/>
    <property type="project" value="RGD"/>
</dbReference>
<dbReference type="GO" id="GO:0009725">
    <property type="term" value="P:response to hormone"/>
    <property type="evidence" value="ECO:0000270"/>
    <property type="project" value="RGD"/>
</dbReference>
<dbReference type="GO" id="GO:0001666">
    <property type="term" value="P:response to hypoxia"/>
    <property type="evidence" value="ECO:0000270"/>
    <property type="project" value="RGD"/>
</dbReference>
<dbReference type="CDD" id="cd19500">
    <property type="entry name" value="RecA-like_Lon"/>
    <property type="match status" value="1"/>
</dbReference>
<dbReference type="FunFam" id="3.40.50.300:FF:000021">
    <property type="entry name" value="Lon protease homolog"/>
    <property type="match status" value="1"/>
</dbReference>
<dbReference type="FunFam" id="1.10.8.60:FF:000043">
    <property type="entry name" value="Lon protease homolog, mitochondrial"/>
    <property type="match status" value="1"/>
</dbReference>
<dbReference type="FunFam" id="1.20.5.5270:FF:000001">
    <property type="entry name" value="Lon protease homolog, mitochondrial"/>
    <property type="match status" value="1"/>
</dbReference>
<dbReference type="FunFam" id="1.20.58.1480:FF:000002">
    <property type="entry name" value="Lon protease homolog, mitochondrial"/>
    <property type="match status" value="1"/>
</dbReference>
<dbReference type="FunFam" id="2.30.130.40:FF:000004">
    <property type="entry name" value="Lon protease homolog, mitochondrial"/>
    <property type="match status" value="1"/>
</dbReference>
<dbReference type="FunFam" id="3.30.230.10:FF:000015">
    <property type="entry name" value="Lon protease homolog, mitochondrial"/>
    <property type="match status" value="1"/>
</dbReference>
<dbReference type="Gene3D" id="1.10.8.60">
    <property type="match status" value="1"/>
</dbReference>
<dbReference type="Gene3D" id="1.20.5.5270">
    <property type="match status" value="1"/>
</dbReference>
<dbReference type="Gene3D" id="1.20.58.1480">
    <property type="match status" value="1"/>
</dbReference>
<dbReference type="Gene3D" id="3.30.230.10">
    <property type="match status" value="1"/>
</dbReference>
<dbReference type="Gene3D" id="2.30.130.40">
    <property type="entry name" value="LON domain-like"/>
    <property type="match status" value="1"/>
</dbReference>
<dbReference type="Gene3D" id="3.40.50.300">
    <property type="entry name" value="P-loop containing nucleotide triphosphate hydrolases"/>
    <property type="match status" value="1"/>
</dbReference>
<dbReference type="HAMAP" id="MF_03120">
    <property type="entry name" value="lonm_euk"/>
    <property type="match status" value="1"/>
</dbReference>
<dbReference type="InterPro" id="IPR003593">
    <property type="entry name" value="AAA+_ATPase"/>
</dbReference>
<dbReference type="InterPro" id="IPR003959">
    <property type="entry name" value="ATPase_AAA_core"/>
</dbReference>
<dbReference type="InterPro" id="IPR004815">
    <property type="entry name" value="Lon_bac/euk-typ"/>
</dbReference>
<dbReference type="InterPro" id="IPR054594">
    <property type="entry name" value="Lon_lid"/>
</dbReference>
<dbReference type="InterPro" id="IPR008269">
    <property type="entry name" value="Lon_proteolytic"/>
</dbReference>
<dbReference type="InterPro" id="IPR027065">
    <property type="entry name" value="Lon_Prtase"/>
</dbReference>
<dbReference type="InterPro" id="IPR003111">
    <property type="entry name" value="Lon_prtase_N"/>
</dbReference>
<dbReference type="InterPro" id="IPR046336">
    <property type="entry name" value="Lon_prtase_N_sf"/>
</dbReference>
<dbReference type="InterPro" id="IPR027503">
    <property type="entry name" value="Lonm_euk"/>
</dbReference>
<dbReference type="InterPro" id="IPR027417">
    <property type="entry name" value="P-loop_NTPase"/>
</dbReference>
<dbReference type="InterPro" id="IPR008268">
    <property type="entry name" value="Peptidase_S16_AS"/>
</dbReference>
<dbReference type="InterPro" id="IPR015947">
    <property type="entry name" value="PUA-like_sf"/>
</dbReference>
<dbReference type="InterPro" id="IPR020568">
    <property type="entry name" value="Ribosomal_Su5_D2-typ_SF"/>
</dbReference>
<dbReference type="InterPro" id="IPR014721">
    <property type="entry name" value="Ribsml_uS5_D2-typ_fold_subgr"/>
</dbReference>
<dbReference type="NCBIfam" id="TIGR00763">
    <property type="entry name" value="lon"/>
    <property type="match status" value="1"/>
</dbReference>
<dbReference type="PANTHER" id="PTHR43718">
    <property type="entry name" value="LON PROTEASE"/>
    <property type="match status" value="1"/>
</dbReference>
<dbReference type="PANTHER" id="PTHR43718:SF2">
    <property type="entry name" value="LON PROTEASE HOMOLOG, MITOCHONDRIAL"/>
    <property type="match status" value="1"/>
</dbReference>
<dbReference type="Pfam" id="PF00004">
    <property type="entry name" value="AAA"/>
    <property type="match status" value="1"/>
</dbReference>
<dbReference type="Pfam" id="PF05362">
    <property type="entry name" value="Lon_C"/>
    <property type="match status" value="1"/>
</dbReference>
<dbReference type="Pfam" id="PF22667">
    <property type="entry name" value="Lon_lid"/>
    <property type="match status" value="1"/>
</dbReference>
<dbReference type="Pfam" id="PF02190">
    <property type="entry name" value="LON_substr_bdg"/>
    <property type="match status" value="1"/>
</dbReference>
<dbReference type="PIRSF" id="PIRSF001174">
    <property type="entry name" value="Lon_proteas"/>
    <property type="match status" value="1"/>
</dbReference>
<dbReference type="PRINTS" id="PR00830">
    <property type="entry name" value="ENDOLAPTASE"/>
</dbReference>
<dbReference type="SMART" id="SM00382">
    <property type="entry name" value="AAA"/>
    <property type="match status" value="1"/>
</dbReference>
<dbReference type="SMART" id="SM00464">
    <property type="entry name" value="LON"/>
    <property type="match status" value="1"/>
</dbReference>
<dbReference type="SUPFAM" id="SSF52540">
    <property type="entry name" value="P-loop containing nucleoside triphosphate hydrolases"/>
    <property type="match status" value="1"/>
</dbReference>
<dbReference type="SUPFAM" id="SSF88697">
    <property type="entry name" value="PUA domain-like"/>
    <property type="match status" value="1"/>
</dbReference>
<dbReference type="SUPFAM" id="SSF54211">
    <property type="entry name" value="Ribosomal protein S5 domain 2-like"/>
    <property type="match status" value="1"/>
</dbReference>
<dbReference type="PROSITE" id="PS51787">
    <property type="entry name" value="LON_N"/>
    <property type="match status" value="1"/>
</dbReference>
<dbReference type="PROSITE" id="PS51786">
    <property type="entry name" value="LON_PROTEOLYTIC"/>
    <property type="match status" value="1"/>
</dbReference>
<dbReference type="PROSITE" id="PS01046">
    <property type="entry name" value="LON_SER"/>
    <property type="match status" value="1"/>
</dbReference>
<comment type="function">
    <text evidence="1 6 7">ATP-dependent serine protease that mediates the selective degradation of misfolded, unassembled or oxidatively damaged polypeptides as well as certain short-lived regulatory proteins in the mitochondrial matrix. Endogenous substrates include mitochondrial steroidogenic acute regulatory (StAR) protein, DELE1, helicase Twinkle (TWNK) and the large ribosomal subunit protein MRPL32/bL32m. MRPL32/bL32m is protected from degradation by LONP1 when it is bound to a nucleic acid (RNA), but TWNK is not. May also have a chaperone function in the assembly of inner membrane protein complexes. Participates in the regulation of mitochondrial gene expression and in the maintenance of the integrity of the mitochondrial genome. Binds to mitochondrial promoters and RNA in a single-stranded, site-specific, and strand-specific manner. May regulate mitochondrial DNA replication and/or gene expression using site-specific, single-stranded DNA binding to target the degradation of regulatory proteins binding to adjacent sites in mitochondrial promoters.</text>
</comment>
<comment type="catalytic activity">
    <reaction evidence="1">
        <text>Hydrolysis of proteins in presence of ATP.</text>
        <dbReference type="EC" id="3.4.21.53"/>
    </reaction>
</comment>
<comment type="subunit">
    <text evidence="1">Homohexamer. Organized in a ring with a central cavity. The ATP-binding and proteolytic domains (AP-domain) form a hexameric chamber, while the N-terminal domain is arranged as a trimer of dimers. DNA and RNA binding is stimulated by substrate and inhibited by ATP binding. Interacts with TWNK and mitochondrial DNA polymerase subunit POLG.</text>
</comment>
<comment type="subcellular location">
    <subcellularLocation>
        <location evidence="1 6 7 8">Mitochondrion matrix</location>
    </subcellularLocation>
</comment>
<comment type="induction">
    <text evidence="5">By hypoxia or ER stress.</text>
</comment>
<comment type="similarity">
    <text evidence="1">Belongs to the peptidase S16 family.</text>
</comment>
<evidence type="ECO:0000255" key="1">
    <source>
        <dbReference type="HAMAP-Rule" id="MF_03120"/>
    </source>
</evidence>
<evidence type="ECO:0000255" key="2">
    <source>
        <dbReference type="PROSITE-ProRule" id="PRU01122"/>
    </source>
</evidence>
<evidence type="ECO:0000255" key="3">
    <source>
        <dbReference type="PROSITE-ProRule" id="PRU01123"/>
    </source>
</evidence>
<evidence type="ECO:0000256" key="4">
    <source>
        <dbReference type="SAM" id="MobiDB-lite"/>
    </source>
</evidence>
<evidence type="ECO:0000269" key="5">
    <source>
    </source>
</evidence>
<evidence type="ECO:0000269" key="6">
    <source>
    </source>
</evidence>
<evidence type="ECO:0000269" key="7">
    <source>
    </source>
</evidence>
<evidence type="ECO:0000269" key="8">
    <source>
    </source>
</evidence>
<feature type="transit peptide" description="Mitochondrion" evidence="1">
    <location>
        <begin position="1"/>
        <end position="65"/>
    </location>
</feature>
<feature type="chain" id="PRO_0000254962" description="Lon protease homolog, mitochondrial">
    <location>
        <begin position="66"/>
        <end position="950"/>
    </location>
</feature>
<feature type="domain" description="Lon N-terminal" evidence="3">
    <location>
        <begin position="112"/>
        <end position="360"/>
    </location>
</feature>
<feature type="domain" description="Lon proteolytic" evidence="2">
    <location>
        <begin position="749"/>
        <end position="939"/>
    </location>
</feature>
<feature type="region of interest" description="Disordered" evidence="4">
    <location>
        <begin position="67"/>
        <end position="94"/>
    </location>
</feature>
<feature type="region of interest" description="Disordered" evidence="4">
    <location>
        <begin position="212"/>
        <end position="243"/>
    </location>
</feature>
<feature type="compositionally biased region" description="Basic residues" evidence="4">
    <location>
        <begin position="224"/>
        <end position="233"/>
    </location>
</feature>
<feature type="active site" evidence="1">
    <location>
        <position position="845"/>
    </location>
</feature>
<feature type="active site" evidence="1">
    <location>
        <position position="888"/>
    </location>
</feature>
<feature type="binding site" evidence="1">
    <location>
        <begin position="513"/>
        <end position="520"/>
    </location>
    <ligand>
        <name>ATP</name>
        <dbReference type="ChEBI" id="CHEBI:30616"/>
    </ligand>
</feature>
<proteinExistence type="evidence at transcript level"/>
<sequence>MAASTGYVRLWAAARCWVLRRPLLAVTGGRVPSASGSWLRRGCRVCDTSTPWGGRVPMGGGQWRGLWDAGSRGGSDETSEGGVEDGATASSGEGPVVTALAPMTVPDVFPHLPLIAISRNPVFPRFIKIVEVKNKKLVELLRRKVRLAQPYVGVFLKRDDNNESDVVESLDEIYHTGTFAQIHEMQDLGDKLRMIVTGHRRIHISRQLEVEPEGLEPEAENKQKSRRKLKRGKKEVGDELGAKPQLEMVTEATSDTSKEVLMVEVENVAHEDFQVTEEVKALTAEIVKTIRDIIALNPLYRESVLQMMQAGQRVVDNPIYLSDMGAALTGAESHELQDVLEETNILKRLYKALSLLKKEFELSKLQQRLGREVEEKIKQTHRKYLLQEQLKIIKKELGLEKDDKDAIEEKFRERLKELVVPKHVMDVVDEELSKLALLDNHSSEFNVTRNYLDWLTSIPWGRQSDENLDLARAQSVLEEDHYGMEDVKKRVLEFIAVSQLRGSTQGKILCFHGPPGVGKTSIARSIARALGREYFRFSVGGMTDVAEIKGHRRTYVGAMPGKIIQCLKKTKTENPLVLIDEVDKIGRGYQGDPSSALLELLDPEQNANFLDHYLDVPVDLSKVLFICTANVTDTIPEPLRDRMEMINVSGYVAQEKLAIAERYLVPQARTLCGLDESKAQLSATVLTLLIKQYCRESGVRNLQKQVEKVLRKAAYKIVSGEAQTVHVTPENLQDFVGKPVFTVERMYDVTPPGVVMGLAWTAMGGSTLFVETSLRRPQPSGSKEDKDGSLEVTGQLGDVMKESARIAYTFARAFLMEQDPENDFLVTSHIHLHVPEGATPKDGPSAGCTIVTALLSLALGQPVLQNLAMTGEVSLTGKVLPVGGIKEKTIAAKRAGVTCIILPAENRKDFSDLAPFITEGLEVHFVEHYRDIFRIAFPLREHQEALAVER</sequence>
<reference key="1">
    <citation type="journal article" date="2002" name="J. Cell Biol.">
        <title>Transmission of cell stress from endoplasmic reticulum to mitochondria: enhanced expression of Lon protease.</title>
        <authorList>
            <person name="Hori O."/>
            <person name="Ichinoda F."/>
            <person name="Tamatani T."/>
            <person name="Yamaguchi A."/>
            <person name="Sato N."/>
            <person name="Ozawa K."/>
            <person name="Kitao Y."/>
            <person name="Miyazaki M."/>
            <person name="Harding H.P."/>
            <person name="Ron D."/>
            <person name="Tohyama M."/>
            <person name="Stern D.M."/>
            <person name="Ogawa S."/>
        </authorList>
    </citation>
    <scope>NUCLEOTIDE SEQUENCE [MRNA]</scope>
    <scope>INDUCTION</scope>
</reference>
<reference key="2">
    <citation type="journal article" date="1994" name="J. Biol. Chem.">
        <title>Synthesis, processing, and localization of human Lon protease.</title>
        <authorList>
            <person name="Wang N."/>
            <person name="Maurizi M.R."/>
            <person name="Emmert-Buck L."/>
            <person name="Gottesman M.M."/>
        </authorList>
    </citation>
    <scope>SUBCELLULAR LOCATION</scope>
</reference>
<reference key="3">
    <citation type="journal article" date="2003" name="Eur. J. Biochem.">
        <title>Changes in rat liver mitochondria with aging. Lon protease-like reactivity and N(epsilon)-carboxymethyllysine accumulation in the matrix.</title>
        <authorList>
            <person name="Bakala H."/>
            <person name="Delaval E."/>
            <person name="Hamelin M."/>
            <person name="Bismuth J."/>
            <person name="Borot-Laloi C."/>
            <person name="Corman B."/>
            <person name="Friguet B."/>
        </authorList>
    </citation>
    <scope>FUNCTION</scope>
    <scope>SUBCELLULAR LOCATION</scope>
</reference>
<reference key="4">
    <citation type="journal article" date="2004" name="Eur. J. Biochem.">
        <title>Age-related impairment of mitochondrial matrix aconitase and ATP-stimulated protease in rat liver and heart.</title>
        <authorList>
            <person name="Delaval E."/>
            <person name="Perichon M."/>
            <person name="Friguet B."/>
        </authorList>
    </citation>
    <scope>FUNCTION</scope>
    <scope>SUBCELLULAR LOCATION</scope>
</reference>
<accession>Q924S5</accession>
<organism>
    <name type="scientific">Rattus norvegicus</name>
    <name type="common">Rat</name>
    <dbReference type="NCBI Taxonomy" id="10116"/>
    <lineage>
        <taxon>Eukaryota</taxon>
        <taxon>Metazoa</taxon>
        <taxon>Chordata</taxon>
        <taxon>Craniata</taxon>
        <taxon>Vertebrata</taxon>
        <taxon>Euteleostomi</taxon>
        <taxon>Mammalia</taxon>
        <taxon>Eutheria</taxon>
        <taxon>Euarchontoglires</taxon>
        <taxon>Glires</taxon>
        <taxon>Rodentia</taxon>
        <taxon>Myomorpha</taxon>
        <taxon>Muroidea</taxon>
        <taxon>Muridae</taxon>
        <taxon>Murinae</taxon>
        <taxon>Rattus</taxon>
    </lineage>
</organism>
<gene>
    <name type="primary">Lonp1</name>
    <name type="synonym">Lon</name>
    <name type="synonym">Prss15</name>
</gene>
<keyword id="KW-0067">ATP-binding</keyword>
<keyword id="KW-0238">DNA-binding</keyword>
<keyword id="KW-0378">Hydrolase</keyword>
<keyword id="KW-0496">Mitochondrion</keyword>
<keyword id="KW-0547">Nucleotide-binding</keyword>
<keyword id="KW-0645">Protease</keyword>
<keyword id="KW-1185">Reference proteome</keyword>
<keyword id="KW-0720">Serine protease</keyword>
<keyword id="KW-0809">Transit peptide</keyword>
<protein>
    <recommendedName>
        <fullName evidence="1">Lon protease homolog, mitochondrial</fullName>
        <ecNumber evidence="1">3.4.21.53</ecNumber>
    </recommendedName>
    <alternativeName>
        <fullName evidence="1">Lon protease-like protein</fullName>
        <shortName evidence="1">LONP</shortName>
    </alternativeName>
    <alternativeName>
        <fullName evidence="1">Mitochondrial ATP-dependent protease Lon</fullName>
    </alternativeName>
    <alternativeName>
        <fullName evidence="1">Serine protease 15</fullName>
    </alternativeName>
</protein>
<name>LONM_RAT</name>